<dbReference type="EC" id="2.7.1.23" evidence="1"/>
<dbReference type="EMBL" id="CP000266">
    <property type="protein sequence ID" value="ABF04933.1"/>
    <property type="molecule type" value="Genomic_DNA"/>
</dbReference>
<dbReference type="RefSeq" id="WP_001059169.1">
    <property type="nucleotide sequence ID" value="NC_008258.1"/>
</dbReference>
<dbReference type="SMR" id="Q0T182"/>
<dbReference type="GeneID" id="93774464"/>
<dbReference type="KEGG" id="sfv:SFV_2856"/>
<dbReference type="HOGENOM" id="CLU_008831_0_1_6"/>
<dbReference type="Proteomes" id="UP000000659">
    <property type="component" value="Chromosome"/>
</dbReference>
<dbReference type="GO" id="GO:0005737">
    <property type="term" value="C:cytoplasm"/>
    <property type="evidence" value="ECO:0007669"/>
    <property type="project" value="UniProtKB-SubCell"/>
</dbReference>
<dbReference type="GO" id="GO:0005524">
    <property type="term" value="F:ATP binding"/>
    <property type="evidence" value="ECO:0007669"/>
    <property type="project" value="UniProtKB-KW"/>
</dbReference>
<dbReference type="GO" id="GO:0046872">
    <property type="term" value="F:metal ion binding"/>
    <property type="evidence" value="ECO:0007669"/>
    <property type="project" value="UniProtKB-UniRule"/>
</dbReference>
<dbReference type="GO" id="GO:0051287">
    <property type="term" value="F:NAD binding"/>
    <property type="evidence" value="ECO:0007669"/>
    <property type="project" value="UniProtKB-ARBA"/>
</dbReference>
<dbReference type="GO" id="GO:0003951">
    <property type="term" value="F:NAD+ kinase activity"/>
    <property type="evidence" value="ECO:0007669"/>
    <property type="project" value="UniProtKB-UniRule"/>
</dbReference>
<dbReference type="GO" id="GO:0019674">
    <property type="term" value="P:NAD metabolic process"/>
    <property type="evidence" value="ECO:0007669"/>
    <property type="project" value="InterPro"/>
</dbReference>
<dbReference type="GO" id="GO:0006741">
    <property type="term" value="P:NADP biosynthetic process"/>
    <property type="evidence" value="ECO:0007669"/>
    <property type="project" value="UniProtKB-UniRule"/>
</dbReference>
<dbReference type="FunFam" id="2.60.200.30:FF:000001">
    <property type="entry name" value="NAD kinase"/>
    <property type="match status" value="1"/>
</dbReference>
<dbReference type="FunFam" id="3.40.50.10330:FF:000004">
    <property type="entry name" value="NAD kinase"/>
    <property type="match status" value="1"/>
</dbReference>
<dbReference type="Gene3D" id="3.40.50.10330">
    <property type="entry name" value="Probable inorganic polyphosphate/atp-NAD kinase, domain 1"/>
    <property type="match status" value="1"/>
</dbReference>
<dbReference type="Gene3D" id="2.60.200.30">
    <property type="entry name" value="Probable inorganic polyphosphate/atp-NAD kinase, domain 2"/>
    <property type="match status" value="1"/>
</dbReference>
<dbReference type="HAMAP" id="MF_00361">
    <property type="entry name" value="NAD_kinase"/>
    <property type="match status" value="1"/>
</dbReference>
<dbReference type="InterPro" id="IPR017438">
    <property type="entry name" value="ATP-NAD_kinase_N"/>
</dbReference>
<dbReference type="InterPro" id="IPR017437">
    <property type="entry name" value="ATP-NAD_kinase_PpnK-typ_C"/>
</dbReference>
<dbReference type="InterPro" id="IPR016064">
    <property type="entry name" value="NAD/diacylglycerol_kinase_sf"/>
</dbReference>
<dbReference type="InterPro" id="IPR002504">
    <property type="entry name" value="NADK"/>
</dbReference>
<dbReference type="NCBIfam" id="NF002306">
    <property type="entry name" value="PRK01231.1"/>
    <property type="match status" value="1"/>
</dbReference>
<dbReference type="NCBIfam" id="NF002893">
    <property type="entry name" value="PRK03378.1"/>
    <property type="match status" value="1"/>
</dbReference>
<dbReference type="PANTHER" id="PTHR20275">
    <property type="entry name" value="NAD KINASE"/>
    <property type="match status" value="1"/>
</dbReference>
<dbReference type="PANTHER" id="PTHR20275:SF0">
    <property type="entry name" value="NAD KINASE"/>
    <property type="match status" value="1"/>
</dbReference>
<dbReference type="Pfam" id="PF01513">
    <property type="entry name" value="NAD_kinase"/>
    <property type="match status" value="1"/>
</dbReference>
<dbReference type="Pfam" id="PF20143">
    <property type="entry name" value="NAD_kinase_C"/>
    <property type="match status" value="1"/>
</dbReference>
<dbReference type="SUPFAM" id="SSF111331">
    <property type="entry name" value="NAD kinase/diacylglycerol kinase-like"/>
    <property type="match status" value="1"/>
</dbReference>
<feature type="chain" id="PRO_1000079520" description="NAD kinase">
    <location>
        <begin position="1"/>
        <end position="292"/>
    </location>
</feature>
<feature type="active site" description="Proton acceptor" evidence="1">
    <location>
        <position position="73"/>
    </location>
</feature>
<feature type="binding site" evidence="1">
    <location>
        <begin position="73"/>
        <end position="74"/>
    </location>
    <ligand>
        <name>NAD(+)</name>
        <dbReference type="ChEBI" id="CHEBI:57540"/>
    </ligand>
</feature>
<feature type="binding site" evidence="1">
    <location>
        <begin position="147"/>
        <end position="148"/>
    </location>
    <ligand>
        <name>NAD(+)</name>
        <dbReference type="ChEBI" id="CHEBI:57540"/>
    </ligand>
</feature>
<feature type="binding site" evidence="1">
    <location>
        <position position="158"/>
    </location>
    <ligand>
        <name>NAD(+)</name>
        <dbReference type="ChEBI" id="CHEBI:57540"/>
    </ligand>
</feature>
<feature type="binding site" evidence="1">
    <location>
        <position position="175"/>
    </location>
    <ligand>
        <name>NAD(+)</name>
        <dbReference type="ChEBI" id="CHEBI:57540"/>
    </ligand>
</feature>
<feature type="binding site" evidence="1">
    <location>
        <position position="177"/>
    </location>
    <ligand>
        <name>NAD(+)</name>
        <dbReference type="ChEBI" id="CHEBI:57540"/>
    </ligand>
</feature>
<feature type="binding site" evidence="1">
    <location>
        <begin position="188"/>
        <end position="193"/>
    </location>
    <ligand>
        <name>NAD(+)</name>
        <dbReference type="ChEBI" id="CHEBI:57540"/>
    </ligand>
</feature>
<feature type="binding site" evidence="1">
    <location>
        <position position="247"/>
    </location>
    <ligand>
        <name>NAD(+)</name>
        <dbReference type="ChEBI" id="CHEBI:57540"/>
    </ligand>
</feature>
<organism>
    <name type="scientific">Shigella flexneri serotype 5b (strain 8401)</name>
    <dbReference type="NCBI Taxonomy" id="373384"/>
    <lineage>
        <taxon>Bacteria</taxon>
        <taxon>Pseudomonadati</taxon>
        <taxon>Pseudomonadota</taxon>
        <taxon>Gammaproteobacteria</taxon>
        <taxon>Enterobacterales</taxon>
        <taxon>Enterobacteriaceae</taxon>
        <taxon>Shigella</taxon>
    </lineage>
</organism>
<accession>Q0T182</accession>
<evidence type="ECO:0000255" key="1">
    <source>
        <dbReference type="HAMAP-Rule" id="MF_00361"/>
    </source>
</evidence>
<protein>
    <recommendedName>
        <fullName evidence="1">NAD kinase</fullName>
        <ecNumber evidence="1">2.7.1.23</ecNumber>
    </recommendedName>
    <alternativeName>
        <fullName evidence="1">ATP-dependent NAD kinase</fullName>
    </alternativeName>
</protein>
<proteinExistence type="inferred from homology"/>
<comment type="function">
    <text evidence="1">Involved in the regulation of the intracellular balance of NAD and NADP, and is a key enzyme in the biosynthesis of NADP. Catalyzes specifically the phosphorylation on 2'-hydroxyl of the adenosine moiety of NAD to yield NADP.</text>
</comment>
<comment type="catalytic activity">
    <reaction evidence="1">
        <text>NAD(+) + ATP = ADP + NADP(+) + H(+)</text>
        <dbReference type="Rhea" id="RHEA:18629"/>
        <dbReference type="ChEBI" id="CHEBI:15378"/>
        <dbReference type="ChEBI" id="CHEBI:30616"/>
        <dbReference type="ChEBI" id="CHEBI:57540"/>
        <dbReference type="ChEBI" id="CHEBI:58349"/>
        <dbReference type="ChEBI" id="CHEBI:456216"/>
        <dbReference type="EC" id="2.7.1.23"/>
    </reaction>
</comment>
<comment type="cofactor">
    <cofactor evidence="1">
        <name>a divalent metal cation</name>
        <dbReference type="ChEBI" id="CHEBI:60240"/>
    </cofactor>
</comment>
<comment type="subcellular location">
    <subcellularLocation>
        <location evidence="1">Cytoplasm</location>
    </subcellularLocation>
</comment>
<comment type="similarity">
    <text evidence="1">Belongs to the NAD kinase family.</text>
</comment>
<gene>
    <name evidence="1" type="primary">nadK</name>
    <name type="ordered locus">SFV_2856</name>
</gene>
<name>NADK_SHIF8</name>
<reference key="1">
    <citation type="journal article" date="2006" name="BMC Genomics">
        <title>Complete genome sequence of Shigella flexneri 5b and comparison with Shigella flexneri 2a.</title>
        <authorList>
            <person name="Nie H."/>
            <person name="Yang F."/>
            <person name="Zhang X."/>
            <person name="Yang J."/>
            <person name="Chen L."/>
            <person name="Wang J."/>
            <person name="Xiong Z."/>
            <person name="Peng J."/>
            <person name="Sun L."/>
            <person name="Dong J."/>
            <person name="Xue Y."/>
            <person name="Xu X."/>
            <person name="Chen S."/>
            <person name="Yao Z."/>
            <person name="Shen Y."/>
            <person name="Jin Q."/>
        </authorList>
    </citation>
    <scope>NUCLEOTIDE SEQUENCE [LARGE SCALE GENOMIC DNA]</scope>
    <source>
        <strain>8401</strain>
    </source>
</reference>
<sequence length="292" mass="32566">MNNHFKCIGIVGHPRHPTALTTHEMLYRWLCTKGYEVIVEQQIAHELQLKNVKTGTLAEIGQLADLAVVVGGDGNMLGAARTLARYDIKVIGINRGNLGFLTDLDPDNAQQQLADVLEGHYISEKRFLLEAQVCQQDCQKRISTAINEVVLHPGKVAHMIEFEVYIDEIFAFSQRSDGLIISTPTGSTAYSLSAGGPILTPSLDAITLVPMFPHTLSARPLVINSSSTIRLRFSHRRNDLEISCDSQIALPIQEGEDVLIRRCDYHLNLIHPKDYSYFNTLSTKLGWSKKLF</sequence>
<keyword id="KW-0067">ATP-binding</keyword>
<keyword id="KW-0963">Cytoplasm</keyword>
<keyword id="KW-0418">Kinase</keyword>
<keyword id="KW-0520">NAD</keyword>
<keyword id="KW-0521">NADP</keyword>
<keyword id="KW-0547">Nucleotide-binding</keyword>
<keyword id="KW-0808">Transferase</keyword>